<protein>
    <recommendedName>
        <fullName evidence="2">Large ribosomal subunit protein eL38</fullName>
    </recommendedName>
    <alternativeName>
        <fullName>60S ribosomal protein L38</fullName>
    </alternativeName>
</protein>
<gene>
    <name type="primary">RPL38</name>
    <name type="ORF">QtrA-13151</name>
</gene>
<reference key="1">
    <citation type="journal article" date="2001" name="Gene">
        <title>Assignment of 118 novel cDNAs of cynomolgus monkey brain to human chromosomes.</title>
        <authorList>
            <person name="Osada N."/>
            <person name="Hida M."/>
            <person name="Kususda J."/>
            <person name="Tanuma R."/>
            <person name="Iseki K."/>
            <person name="Hirata M."/>
            <person name="Suto Y."/>
            <person name="Hirai M."/>
            <person name="Terao K."/>
            <person name="Suzuki Y."/>
            <person name="Sugano S."/>
            <person name="Hashimoto K."/>
        </authorList>
    </citation>
    <scope>NUCLEOTIDE SEQUENCE [LARGE SCALE MRNA]</scope>
    <source>
        <tissue>Temporal cortex</tissue>
    </source>
</reference>
<reference key="2">
    <citation type="journal article" date="2001" name="Gene">
        <authorList>
            <person name="Osada N."/>
            <person name="Hida M."/>
            <person name="Kusuda J."/>
            <person name="Tanuma R."/>
            <person name="Iseki K."/>
            <person name="Hirata M."/>
            <person name="Suto Y."/>
            <person name="Hirai M."/>
            <person name="Terao K."/>
            <person name="Suzuki Y."/>
            <person name="Sugano S."/>
            <person name="Hashimoto K."/>
            <person name="Kususda J."/>
        </authorList>
    </citation>
    <scope>ERRATUM OF PUBMED:11574149</scope>
</reference>
<name>RL38_MACFA</name>
<organism>
    <name type="scientific">Macaca fascicularis</name>
    <name type="common">Crab-eating macaque</name>
    <name type="synonym">Cynomolgus monkey</name>
    <dbReference type="NCBI Taxonomy" id="9541"/>
    <lineage>
        <taxon>Eukaryota</taxon>
        <taxon>Metazoa</taxon>
        <taxon>Chordata</taxon>
        <taxon>Craniata</taxon>
        <taxon>Vertebrata</taxon>
        <taxon>Euteleostomi</taxon>
        <taxon>Mammalia</taxon>
        <taxon>Eutheria</taxon>
        <taxon>Euarchontoglires</taxon>
        <taxon>Primates</taxon>
        <taxon>Haplorrhini</taxon>
        <taxon>Catarrhini</taxon>
        <taxon>Cercopithecidae</taxon>
        <taxon>Cercopithecinae</taxon>
        <taxon>Macaca</taxon>
    </lineage>
</organism>
<comment type="function">
    <text evidence="1">Component of the large ribosomal subunit. The ribosome is a large ribonucleoprotein complex responsible for the synthesis of proteins in the cell.</text>
</comment>
<comment type="subunit">
    <text evidence="1">Component of the large ribosomal subunit.</text>
</comment>
<comment type="subcellular location">
    <subcellularLocation>
        <location evidence="1">Cytoplasm</location>
    </subcellularLocation>
</comment>
<comment type="similarity">
    <text evidence="2">Belongs to the eukaryotic ribosomal protein eL38 family.</text>
</comment>
<feature type="chain" id="PRO_0000215435" description="Large ribosomal subunit protein eL38">
    <location>
        <begin position="1"/>
        <end position="70"/>
    </location>
</feature>
<feature type="modified residue" description="N6-acetyllysine; alternate" evidence="1">
    <location>
        <position position="9"/>
    </location>
</feature>
<feature type="modified residue" description="N6-acetyllysine" evidence="1">
    <location>
        <position position="67"/>
    </location>
</feature>
<feature type="cross-link" description="Glycyl lysine isopeptide (Lys-Gly) (interchain with G-Cter in SUMO2)" evidence="1">
    <location>
        <position position="4"/>
    </location>
</feature>
<feature type="cross-link" description="Glycyl lysine isopeptide (Lys-Gly) (interchain with G-Cter in SUMO2); alternate" evidence="1">
    <location>
        <position position="9"/>
    </location>
</feature>
<keyword id="KW-0007">Acetylation</keyword>
<keyword id="KW-0963">Cytoplasm</keyword>
<keyword id="KW-1017">Isopeptide bond</keyword>
<keyword id="KW-1185">Reference proteome</keyword>
<keyword id="KW-0687">Ribonucleoprotein</keyword>
<keyword id="KW-0689">Ribosomal protein</keyword>
<keyword id="KW-0832">Ubl conjugation</keyword>
<evidence type="ECO:0000250" key="1">
    <source>
        <dbReference type="UniProtKB" id="P63173"/>
    </source>
</evidence>
<evidence type="ECO:0000305" key="2"/>
<accession>Q8HXB9</accession>
<dbReference type="EMBL" id="AB093674">
    <property type="protein sequence ID" value="BAC21648.1"/>
    <property type="molecule type" value="mRNA"/>
</dbReference>
<dbReference type="SMR" id="Q8HXB9"/>
<dbReference type="STRING" id="9541.ENSMFAP00000012996"/>
<dbReference type="eggNOG" id="KOG3499">
    <property type="taxonomic scope" value="Eukaryota"/>
</dbReference>
<dbReference type="Proteomes" id="UP000233100">
    <property type="component" value="Unplaced"/>
</dbReference>
<dbReference type="GO" id="GO:0022625">
    <property type="term" value="C:cytosolic large ribosomal subunit"/>
    <property type="evidence" value="ECO:0007669"/>
    <property type="project" value="TreeGrafter"/>
</dbReference>
<dbReference type="GO" id="GO:0003735">
    <property type="term" value="F:structural constituent of ribosome"/>
    <property type="evidence" value="ECO:0007669"/>
    <property type="project" value="InterPro"/>
</dbReference>
<dbReference type="GO" id="GO:0022618">
    <property type="term" value="P:protein-RNA complex assembly"/>
    <property type="evidence" value="ECO:0007669"/>
    <property type="project" value="TreeGrafter"/>
</dbReference>
<dbReference type="GO" id="GO:0006412">
    <property type="term" value="P:translation"/>
    <property type="evidence" value="ECO:0007669"/>
    <property type="project" value="InterPro"/>
</dbReference>
<dbReference type="FunFam" id="3.30.720.90:FF:000001">
    <property type="entry name" value="60S ribosomal protein L38"/>
    <property type="match status" value="1"/>
</dbReference>
<dbReference type="Gene3D" id="3.30.720.90">
    <property type="match status" value="1"/>
</dbReference>
<dbReference type="InterPro" id="IPR002675">
    <property type="entry name" value="Ribosomal_eL38"/>
</dbReference>
<dbReference type="InterPro" id="IPR038464">
    <property type="entry name" value="Ribosomal_eL38_sf"/>
</dbReference>
<dbReference type="PANTHER" id="PTHR10965">
    <property type="entry name" value="60S RIBOSOMAL PROTEIN L38"/>
    <property type="match status" value="1"/>
</dbReference>
<dbReference type="PANTHER" id="PTHR10965:SF0">
    <property type="entry name" value="LARGE RIBOSOMAL SUBUNIT PROTEIN EL38"/>
    <property type="match status" value="1"/>
</dbReference>
<dbReference type="Pfam" id="PF01781">
    <property type="entry name" value="Ribosomal_L38e"/>
    <property type="match status" value="1"/>
</dbReference>
<proteinExistence type="inferred from homology"/>
<sequence length="70" mass="8202">MPRKIEEIKDFLLTARRKDAKSVKIKKNKDNVKFKVRCSRYLYTLVITDKEKAEKLKQSLPPGLAVKEPK</sequence>